<keyword id="KW-0002">3D-structure</keyword>
<keyword id="KW-0007">Acetylation</keyword>
<keyword id="KW-0041">Annexin</keyword>
<keyword id="KW-0106">Calcium</keyword>
<keyword id="KW-0111">Calcium/phospholipid-binding</keyword>
<keyword id="KW-0963">Cytoplasm</keyword>
<keyword id="KW-0597">Phosphoprotein</keyword>
<keyword id="KW-1185">Reference proteome</keyword>
<keyword id="KW-0677">Repeat</keyword>
<dbReference type="EMBL" id="BC151391">
    <property type="protein sequence ID" value="AAI51392.1"/>
    <property type="molecule type" value="mRNA"/>
</dbReference>
<dbReference type="EMBL" id="U87539">
    <property type="protein sequence ID" value="AAB47570.1"/>
    <property type="molecule type" value="mRNA"/>
</dbReference>
<dbReference type="RefSeq" id="NP_001096694.1">
    <property type="nucleotide sequence ID" value="NM_001103224.1"/>
</dbReference>
<dbReference type="RefSeq" id="XP_005209618.1">
    <property type="nucleotide sequence ID" value="XM_005209561.5"/>
</dbReference>
<dbReference type="RefSeq" id="XP_010805730.1">
    <property type="nucleotide sequence ID" value="XM_010807428.2"/>
</dbReference>
<dbReference type="PDB" id="1AVC">
    <property type="method" value="X-ray"/>
    <property type="resolution" value="2.90 A"/>
    <property type="chains" value="A=1-673"/>
</dbReference>
<dbReference type="PDBsum" id="1AVC"/>
<dbReference type="SMR" id="P79134"/>
<dbReference type="CORUM" id="P79134"/>
<dbReference type="FunCoup" id="P79134">
    <property type="interactions" value="909"/>
</dbReference>
<dbReference type="STRING" id="9913.ENSBTAP00000064236"/>
<dbReference type="ChEMBL" id="CHEMBL3308975"/>
<dbReference type="PaxDb" id="9913-ENSBTAP00000019719"/>
<dbReference type="PeptideAtlas" id="P79134"/>
<dbReference type="GeneID" id="327685"/>
<dbReference type="KEGG" id="bta:327685"/>
<dbReference type="CTD" id="309"/>
<dbReference type="VEuPathDB" id="HostDB:ENSBTAG00000014809"/>
<dbReference type="eggNOG" id="KOG0819">
    <property type="taxonomic scope" value="Eukaryota"/>
</dbReference>
<dbReference type="HOGENOM" id="CLU_017145_0_0_1"/>
<dbReference type="InParanoid" id="P79134"/>
<dbReference type="OMA" id="LMGKFER"/>
<dbReference type="OrthoDB" id="37886at2759"/>
<dbReference type="TreeFam" id="TF105452"/>
<dbReference type="EvolutionaryTrace" id="P79134"/>
<dbReference type="Proteomes" id="UP000009136">
    <property type="component" value="Chromosome 7"/>
</dbReference>
<dbReference type="Bgee" id="ENSBTAG00000014809">
    <property type="expression patterns" value="Expressed in myometrium and 106 other cell types or tissues"/>
</dbReference>
<dbReference type="GO" id="GO:0042584">
    <property type="term" value="C:chromaffin granule membrane"/>
    <property type="evidence" value="ECO:0000314"/>
    <property type="project" value="AgBase"/>
</dbReference>
<dbReference type="GO" id="GO:0005737">
    <property type="term" value="C:cytoplasm"/>
    <property type="evidence" value="ECO:0000314"/>
    <property type="project" value="AgBase"/>
</dbReference>
<dbReference type="GO" id="GO:0005925">
    <property type="term" value="C:focal adhesion"/>
    <property type="evidence" value="ECO:0000315"/>
    <property type="project" value="AgBase"/>
</dbReference>
<dbReference type="GO" id="GO:0042470">
    <property type="term" value="C:melanosome"/>
    <property type="evidence" value="ECO:0007669"/>
    <property type="project" value="UniProtKB-SubCell"/>
</dbReference>
<dbReference type="GO" id="GO:0016020">
    <property type="term" value="C:membrane"/>
    <property type="evidence" value="ECO:0000314"/>
    <property type="project" value="AgBase"/>
</dbReference>
<dbReference type="GO" id="GO:0030061">
    <property type="term" value="C:mitochondrial crista"/>
    <property type="evidence" value="ECO:0000314"/>
    <property type="project" value="AgBase"/>
</dbReference>
<dbReference type="GO" id="GO:0005634">
    <property type="term" value="C:nucleus"/>
    <property type="evidence" value="ECO:0000318"/>
    <property type="project" value="GO_Central"/>
</dbReference>
<dbReference type="GO" id="GO:0048471">
    <property type="term" value="C:perinuclear region of cytoplasm"/>
    <property type="evidence" value="ECO:0000250"/>
    <property type="project" value="AgBase"/>
</dbReference>
<dbReference type="GO" id="GO:0005886">
    <property type="term" value="C:plasma membrane"/>
    <property type="evidence" value="ECO:0000314"/>
    <property type="project" value="AgBase"/>
</dbReference>
<dbReference type="GO" id="GO:0001725">
    <property type="term" value="C:stress fiber"/>
    <property type="evidence" value="ECO:0000315"/>
    <property type="project" value="AgBase"/>
</dbReference>
<dbReference type="GO" id="GO:0031982">
    <property type="term" value="C:vesicle"/>
    <property type="evidence" value="ECO:0000314"/>
    <property type="project" value="AgBase"/>
</dbReference>
<dbReference type="GO" id="GO:0012506">
    <property type="term" value="C:vesicle membrane"/>
    <property type="evidence" value="ECO:0000318"/>
    <property type="project" value="GO_Central"/>
</dbReference>
<dbReference type="GO" id="GO:0051015">
    <property type="term" value="F:actin filament binding"/>
    <property type="evidence" value="ECO:0000353"/>
    <property type="project" value="AgBase"/>
</dbReference>
<dbReference type="GO" id="GO:0005262">
    <property type="term" value="F:calcium channel activity"/>
    <property type="evidence" value="ECO:0000315"/>
    <property type="project" value="AgBase"/>
</dbReference>
<dbReference type="GO" id="GO:0005509">
    <property type="term" value="F:calcium ion binding"/>
    <property type="evidence" value="ECO:0007669"/>
    <property type="project" value="InterPro"/>
</dbReference>
<dbReference type="GO" id="GO:0005544">
    <property type="term" value="F:calcium-dependent phospholipid binding"/>
    <property type="evidence" value="ECO:0000314"/>
    <property type="project" value="AgBase"/>
</dbReference>
<dbReference type="GO" id="GO:0048306">
    <property type="term" value="F:calcium-dependent protein binding"/>
    <property type="evidence" value="ECO:0000353"/>
    <property type="project" value="AgBase"/>
</dbReference>
<dbReference type="GO" id="GO:0038024">
    <property type="term" value="F:cargo receptor activity"/>
    <property type="evidence" value="ECO:0000314"/>
    <property type="project" value="AgBase"/>
</dbReference>
<dbReference type="GO" id="GO:0035374">
    <property type="term" value="F:chondroitin sulfate binding"/>
    <property type="evidence" value="ECO:0000314"/>
    <property type="project" value="AgBase"/>
</dbReference>
<dbReference type="GO" id="GO:0019899">
    <property type="term" value="F:enzyme binding"/>
    <property type="evidence" value="ECO:0000353"/>
    <property type="project" value="AgBase"/>
</dbReference>
<dbReference type="GO" id="GO:0008201">
    <property type="term" value="F:heparin binding"/>
    <property type="evidence" value="ECO:0000314"/>
    <property type="project" value="AgBase"/>
</dbReference>
<dbReference type="GO" id="GO:0001786">
    <property type="term" value="F:phosphatidylserine binding"/>
    <property type="evidence" value="ECO:0000353"/>
    <property type="project" value="AgBase"/>
</dbReference>
<dbReference type="GO" id="GO:0097190">
    <property type="term" value="P:apoptotic signaling pathway"/>
    <property type="evidence" value="ECO:0000318"/>
    <property type="project" value="GO_Central"/>
</dbReference>
<dbReference type="GO" id="GO:0031214">
    <property type="term" value="P:biomineral tissue development"/>
    <property type="evidence" value="ECO:0000314"/>
    <property type="project" value="AgBase"/>
</dbReference>
<dbReference type="GO" id="GO:0070509">
    <property type="term" value="P:calcium ion import"/>
    <property type="evidence" value="ECO:0000315"/>
    <property type="project" value="AgBase"/>
</dbReference>
<dbReference type="GO" id="GO:0070588">
    <property type="term" value="P:calcium ion transmembrane transport"/>
    <property type="evidence" value="ECO:0000314"/>
    <property type="project" value="AgBase"/>
</dbReference>
<dbReference type="GO" id="GO:0006816">
    <property type="term" value="P:calcium ion transport"/>
    <property type="evidence" value="ECO:0000250"/>
    <property type="project" value="AgBase"/>
</dbReference>
<dbReference type="GO" id="GO:0003418">
    <property type="term" value="P:growth plate cartilage chondrocyte differentiation"/>
    <property type="evidence" value="ECO:0000314"/>
    <property type="project" value="AgBase"/>
</dbReference>
<dbReference type="GO" id="GO:0051560">
    <property type="term" value="P:mitochondrial calcium ion homeostasis"/>
    <property type="evidence" value="ECO:0000318"/>
    <property type="project" value="GO_Central"/>
</dbReference>
<dbReference type="GO" id="GO:0051283">
    <property type="term" value="P:negative regulation of sequestering of calcium ion"/>
    <property type="evidence" value="ECO:0000314"/>
    <property type="project" value="AgBase"/>
</dbReference>
<dbReference type="GO" id="GO:0006937">
    <property type="term" value="P:regulation of muscle contraction"/>
    <property type="evidence" value="ECO:0000250"/>
    <property type="project" value="AgBase"/>
</dbReference>
<dbReference type="FunFam" id="1.10.220.10:FF:000001">
    <property type="entry name" value="Annexin"/>
    <property type="match status" value="2"/>
</dbReference>
<dbReference type="FunFam" id="1.10.220.10:FF:000002">
    <property type="entry name" value="Annexin"/>
    <property type="match status" value="1"/>
</dbReference>
<dbReference type="FunFam" id="1.10.220.10:FF:000003">
    <property type="entry name" value="Annexin"/>
    <property type="match status" value="2"/>
</dbReference>
<dbReference type="FunFam" id="1.10.220.10:FF:000004">
    <property type="entry name" value="Annexin"/>
    <property type="match status" value="1"/>
</dbReference>
<dbReference type="FunFam" id="1.10.220.10:FF:000005">
    <property type="entry name" value="Annexin"/>
    <property type="match status" value="1"/>
</dbReference>
<dbReference type="FunFam" id="1.10.220.10:FF:000013">
    <property type="entry name" value="Annexin"/>
    <property type="match status" value="1"/>
</dbReference>
<dbReference type="Gene3D" id="1.10.220.10">
    <property type="entry name" value="Annexin"/>
    <property type="match status" value="8"/>
</dbReference>
<dbReference type="InterPro" id="IPR001464">
    <property type="entry name" value="Annexin"/>
</dbReference>
<dbReference type="InterPro" id="IPR018502">
    <property type="entry name" value="Annexin_repeat"/>
</dbReference>
<dbReference type="InterPro" id="IPR018252">
    <property type="entry name" value="Annexin_repeat_CS"/>
</dbReference>
<dbReference type="InterPro" id="IPR037104">
    <property type="entry name" value="Annexin_sf"/>
</dbReference>
<dbReference type="InterPro" id="IPR002393">
    <property type="entry name" value="ANX6"/>
</dbReference>
<dbReference type="PANTHER" id="PTHR10502">
    <property type="entry name" value="ANNEXIN"/>
    <property type="match status" value="1"/>
</dbReference>
<dbReference type="PANTHER" id="PTHR10502:SF19">
    <property type="entry name" value="ANNEXIN A6"/>
    <property type="match status" value="1"/>
</dbReference>
<dbReference type="Pfam" id="PF00191">
    <property type="entry name" value="Annexin"/>
    <property type="match status" value="8"/>
</dbReference>
<dbReference type="PRINTS" id="PR00196">
    <property type="entry name" value="ANNEXIN"/>
</dbReference>
<dbReference type="PRINTS" id="PR00202">
    <property type="entry name" value="ANNEXINVI"/>
</dbReference>
<dbReference type="SMART" id="SM00335">
    <property type="entry name" value="ANX"/>
    <property type="match status" value="8"/>
</dbReference>
<dbReference type="SUPFAM" id="SSF47874">
    <property type="entry name" value="Annexin"/>
    <property type="match status" value="2"/>
</dbReference>
<dbReference type="PROSITE" id="PS00223">
    <property type="entry name" value="ANNEXIN_1"/>
    <property type="match status" value="7"/>
</dbReference>
<dbReference type="PROSITE" id="PS51897">
    <property type="entry name" value="ANNEXIN_2"/>
    <property type="match status" value="8"/>
</dbReference>
<evidence type="ECO:0000250" key="1"/>
<evidence type="ECO:0000250" key="2">
    <source>
        <dbReference type="UniProtKB" id="P08133"/>
    </source>
</evidence>
<evidence type="ECO:0000250" key="3">
    <source>
        <dbReference type="UniProtKB" id="P14824"/>
    </source>
</evidence>
<evidence type="ECO:0000250" key="4">
    <source>
        <dbReference type="UniProtKB" id="P48037"/>
    </source>
</evidence>
<evidence type="ECO:0000255" key="5">
    <source>
        <dbReference type="PROSITE-ProRule" id="PRU01245"/>
    </source>
</evidence>
<evidence type="ECO:0000305" key="6"/>
<evidence type="ECO:0007829" key="7">
    <source>
        <dbReference type="PDB" id="1AVC"/>
    </source>
</evidence>
<feature type="initiator methionine" description="Removed" evidence="2">
    <location>
        <position position="1"/>
    </location>
</feature>
<feature type="chain" id="PRO_0000067493" description="Annexin A6">
    <location>
        <begin position="2"/>
        <end position="673"/>
    </location>
</feature>
<feature type="repeat" description="Annexin 1" evidence="5">
    <location>
        <begin position="20"/>
        <end position="91"/>
    </location>
</feature>
<feature type="repeat" description="Annexin 2" evidence="5">
    <location>
        <begin position="92"/>
        <end position="163"/>
    </location>
</feature>
<feature type="repeat" description="Annexin 3" evidence="5">
    <location>
        <begin position="175"/>
        <end position="247"/>
    </location>
</feature>
<feature type="repeat" description="Annexin 4" evidence="5">
    <location>
        <begin position="251"/>
        <end position="322"/>
    </location>
</feature>
<feature type="repeat" description="Annexin 5" evidence="5">
    <location>
        <begin position="363"/>
        <end position="434"/>
    </location>
</feature>
<feature type="repeat" description="Annexin 6" evidence="5">
    <location>
        <begin position="435"/>
        <end position="506"/>
    </location>
</feature>
<feature type="repeat" description="Annexin 7" evidence="5">
    <location>
        <begin position="521"/>
        <end position="595"/>
    </location>
</feature>
<feature type="repeat" description="Annexin 8" evidence="5">
    <location>
        <begin position="599"/>
        <end position="670"/>
    </location>
</feature>
<feature type="modified residue" description="N-acetylalanine" evidence="2">
    <location>
        <position position="2"/>
    </location>
</feature>
<feature type="modified residue" description="Phosphoserine" evidence="2">
    <location>
        <position position="13"/>
    </location>
</feature>
<feature type="modified residue" description="Phosphotyrosine" evidence="2">
    <location>
        <position position="30"/>
    </location>
</feature>
<feature type="modified residue" description="N6-acetyllysine" evidence="2">
    <location>
        <position position="63"/>
    </location>
</feature>
<feature type="modified residue" description="N6-acetyllysine" evidence="2">
    <location>
        <position position="68"/>
    </location>
</feature>
<feature type="modified residue" description="N6-acetyllysine" evidence="2">
    <location>
        <position position="75"/>
    </location>
</feature>
<feature type="modified residue" description="N6-acetyllysine" evidence="2">
    <location>
        <position position="81"/>
    </location>
</feature>
<feature type="modified residue" description="Phosphotyrosine" evidence="3">
    <location>
        <position position="201"/>
    </location>
</feature>
<feature type="modified residue" description="N6-acetyllysine" evidence="2">
    <location>
        <position position="306"/>
    </location>
</feature>
<feature type="modified residue" description="N6-acetyllysine" evidence="2">
    <location>
        <position position="370"/>
    </location>
</feature>
<feature type="modified residue" description="N6-acetyllysine" evidence="2">
    <location>
        <position position="418"/>
    </location>
</feature>
<feature type="modified residue" description="Phosphoserine" evidence="4">
    <location>
        <position position="422"/>
    </location>
</feature>
<feature type="modified residue" description="N6-acetyllysine" evidence="2">
    <location>
        <position position="483"/>
    </location>
</feature>
<feature type="modified residue" description="Phosphoserine" evidence="2">
    <location>
        <position position="537"/>
    </location>
</feature>
<feature type="modified residue" description="N6-acetyllysine" evidence="2">
    <location>
        <position position="620"/>
    </location>
</feature>
<feature type="sequence conflict" description="In Ref. 2; AAB47570." evidence="6" ref="2">
    <original>D</original>
    <variation>E</variation>
    <location>
        <position position="141"/>
    </location>
</feature>
<feature type="sequence conflict" description="In Ref. 2; AAB47570." evidence="6" ref="2">
    <original>V</original>
    <variation>L</variation>
    <location>
        <position position="181"/>
    </location>
</feature>
<feature type="sequence conflict" description="In Ref. 2; AAB47570." evidence="6" ref="2">
    <original>A</original>
    <variation>T</variation>
    <location>
        <position position="391"/>
    </location>
</feature>
<feature type="sequence conflict" description="In Ref. 2; AAB47570." evidence="6" ref="2">
    <original>S</original>
    <variation>T</variation>
    <location>
        <position position="484"/>
    </location>
</feature>
<feature type="sequence conflict" description="In Ref. 2; AAB47570." evidence="6" ref="2">
    <original>H</original>
    <variation>D</variation>
    <location>
        <position position="558"/>
    </location>
</feature>
<feature type="sequence conflict" description="In Ref. 2; AAB47570." evidence="6" ref="2">
    <original>I</original>
    <variation>V</variation>
    <location>
        <position position="567"/>
    </location>
</feature>
<feature type="sequence conflict" description="In Ref. 2; AAB47570." evidence="6" ref="2">
    <original>D</original>
    <variation>E</variation>
    <location>
        <position position="618"/>
    </location>
</feature>
<feature type="helix" evidence="7">
    <location>
        <begin position="22"/>
        <end position="32"/>
    </location>
</feature>
<feature type="strand" evidence="7">
    <location>
        <begin position="35"/>
        <end position="37"/>
    </location>
</feature>
<feature type="helix" evidence="7">
    <location>
        <begin position="40"/>
        <end position="47"/>
    </location>
</feature>
<feature type="helix" evidence="7">
    <location>
        <begin position="52"/>
        <end position="66"/>
    </location>
</feature>
<feature type="helix" evidence="7">
    <location>
        <begin position="70"/>
        <end position="77"/>
    </location>
</feature>
<feature type="helix" evidence="7">
    <location>
        <begin position="81"/>
        <end position="90"/>
    </location>
</feature>
<feature type="helix" evidence="7">
    <location>
        <begin position="93"/>
        <end position="105"/>
    </location>
</feature>
<feature type="strand" evidence="7">
    <location>
        <begin position="106"/>
        <end position="109"/>
    </location>
</feature>
<feature type="helix" evidence="7">
    <location>
        <begin position="112"/>
        <end position="121"/>
    </location>
</feature>
<feature type="helix" evidence="7">
    <location>
        <begin position="124"/>
        <end position="138"/>
    </location>
</feature>
<feature type="helix" evidence="7">
    <location>
        <begin position="142"/>
        <end position="147"/>
    </location>
</feature>
<feature type="helix" evidence="7">
    <location>
        <begin position="153"/>
        <end position="163"/>
    </location>
</feature>
<feature type="helix" evidence="7">
    <location>
        <begin position="174"/>
        <end position="187"/>
    </location>
</feature>
<feature type="turn" evidence="7">
    <location>
        <begin position="188"/>
        <end position="190"/>
    </location>
</feature>
<feature type="strand" evidence="7">
    <location>
        <begin position="191"/>
        <end position="193"/>
    </location>
</feature>
<feature type="helix" evidence="7">
    <location>
        <begin position="196"/>
        <end position="205"/>
    </location>
</feature>
<feature type="helix" evidence="7">
    <location>
        <begin position="208"/>
        <end position="222"/>
    </location>
</feature>
<feature type="helix" evidence="7">
    <location>
        <begin position="226"/>
        <end position="230"/>
    </location>
</feature>
<feature type="helix" evidence="7">
    <location>
        <begin position="236"/>
        <end position="250"/>
    </location>
</feature>
<feature type="helix" evidence="7">
    <location>
        <begin position="252"/>
        <end position="264"/>
    </location>
</feature>
<feature type="strand" evidence="7">
    <location>
        <begin position="265"/>
        <end position="268"/>
    </location>
</feature>
<feature type="helix" evidence="7">
    <location>
        <begin position="271"/>
        <end position="280"/>
    </location>
</feature>
<feature type="turn" evidence="7">
    <location>
        <begin position="281"/>
        <end position="285"/>
    </location>
</feature>
<feature type="helix" evidence="7">
    <location>
        <begin position="286"/>
        <end position="296"/>
    </location>
</feature>
<feature type="strand" evidence="7">
    <location>
        <begin position="297"/>
        <end position="299"/>
    </location>
</feature>
<feature type="helix" evidence="7">
    <location>
        <begin position="301"/>
        <end position="308"/>
    </location>
</feature>
<feature type="helix" evidence="7">
    <location>
        <begin position="311"/>
        <end position="321"/>
    </location>
</feature>
<feature type="helix" evidence="7">
    <location>
        <begin position="333"/>
        <end position="348"/>
    </location>
</feature>
<feature type="helix" evidence="7">
    <location>
        <begin position="365"/>
        <end position="374"/>
    </location>
</feature>
<feature type="strand" evidence="7">
    <location>
        <begin position="377"/>
        <end position="380"/>
    </location>
</feature>
<feature type="helix" evidence="7">
    <location>
        <begin position="383"/>
        <end position="390"/>
    </location>
</feature>
<feature type="helix" evidence="7">
    <location>
        <begin position="395"/>
        <end position="409"/>
    </location>
</feature>
<feature type="helix" evidence="7">
    <location>
        <begin position="413"/>
        <end position="420"/>
    </location>
</feature>
<feature type="helix" evidence="7">
    <location>
        <begin position="423"/>
        <end position="433"/>
    </location>
</feature>
<feature type="helix" evidence="7">
    <location>
        <begin position="436"/>
        <end position="447"/>
    </location>
</feature>
<feature type="strand" evidence="7">
    <location>
        <begin position="449"/>
        <end position="452"/>
    </location>
</feature>
<feature type="helix" evidence="7">
    <location>
        <begin position="455"/>
        <end position="462"/>
    </location>
</feature>
<feature type="helix" evidence="7">
    <location>
        <begin position="467"/>
        <end position="480"/>
    </location>
</feature>
<feature type="strand" evidence="7">
    <location>
        <begin position="481"/>
        <end position="483"/>
    </location>
</feature>
<feature type="helix" evidence="7">
    <location>
        <begin position="485"/>
        <end position="492"/>
    </location>
</feature>
<feature type="helix" evidence="7">
    <location>
        <begin position="495"/>
        <end position="504"/>
    </location>
</feature>
<feature type="helix" evidence="7">
    <location>
        <begin position="516"/>
        <end position="529"/>
    </location>
</feature>
<feature type="helix" evidence="7">
    <location>
        <begin position="546"/>
        <end position="553"/>
    </location>
</feature>
<feature type="helix" evidence="7">
    <location>
        <begin position="556"/>
        <end position="570"/>
    </location>
</feature>
<feature type="helix" evidence="7">
    <location>
        <begin position="574"/>
        <end position="581"/>
    </location>
</feature>
<feature type="helix" evidence="7">
    <location>
        <begin position="584"/>
        <end position="611"/>
    </location>
</feature>
<feature type="strand" evidence="7">
    <location>
        <begin position="613"/>
        <end position="616"/>
    </location>
</feature>
<feature type="helix" evidence="7">
    <location>
        <begin position="619"/>
        <end position="628"/>
    </location>
</feature>
<feature type="turn" evidence="7">
    <location>
        <begin position="629"/>
        <end position="633"/>
    </location>
</feature>
<feature type="helix" evidence="7">
    <location>
        <begin position="634"/>
        <end position="645"/>
    </location>
</feature>
<feature type="helix" evidence="7">
    <location>
        <begin position="649"/>
        <end position="656"/>
    </location>
</feature>
<feature type="helix" evidence="7">
    <location>
        <begin position="659"/>
        <end position="669"/>
    </location>
</feature>
<accession>P79134</accession>
<accession>A7YY61</accession>
<protein>
    <recommendedName>
        <fullName>Annexin A6</fullName>
    </recommendedName>
    <alternativeName>
        <fullName>Annexin VI</fullName>
    </alternativeName>
    <alternativeName>
        <fullName>Annexin-6</fullName>
    </alternativeName>
</protein>
<proteinExistence type="evidence at protein level"/>
<comment type="function">
    <text>May associate with CD21. May regulate the release of Ca(2+) from intracellular stores.</text>
</comment>
<comment type="subcellular location">
    <subcellularLocation>
        <location evidence="1">Cytoplasm</location>
    </subcellularLocation>
    <subcellularLocation>
        <location evidence="1">Melanosome</location>
    </subcellularLocation>
</comment>
<comment type="domain">
    <text>A pair of annexin repeats may form one binding site for calcium and phospholipid.</text>
</comment>
<comment type="PTM">
    <text evidence="1">Phosphorylated in response to growth factor stimulation.</text>
</comment>
<comment type="miscellaneous">
    <text>Seems to bind one calcium ion with high affinity.</text>
</comment>
<comment type="similarity">
    <text evidence="5 6">Belongs to the annexin family.</text>
</comment>
<name>ANXA6_BOVIN</name>
<organism>
    <name type="scientific">Bos taurus</name>
    <name type="common">Bovine</name>
    <dbReference type="NCBI Taxonomy" id="9913"/>
    <lineage>
        <taxon>Eukaryota</taxon>
        <taxon>Metazoa</taxon>
        <taxon>Chordata</taxon>
        <taxon>Craniata</taxon>
        <taxon>Vertebrata</taxon>
        <taxon>Euteleostomi</taxon>
        <taxon>Mammalia</taxon>
        <taxon>Eutheria</taxon>
        <taxon>Laurasiatheria</taxon>
        <taxon>Artiodactyla</taxon>
        <taxon>Ruminantia</taxon>
        <taxon>Pecora</taxon>
        <taxon>Bovidae</taxon>
        <taxon>Bovinae</taxon>
        <taxon>Bos</taxon>
    </lineage>
</organism>
<reference key="1">
    <citation type="submission" date="2007-07" db="EMBL/GenBank/DDBJ databases">
        <authorList>
            <consortium name="NIH - Mammalian Gene Collection (MGC) project"/>
        </authorList>
    </citation>
    <scope>NUCLEOTIDE SEQUENCE [LARGE SCALE MRNA]</scope>
    <source>
        <strain>Hereford</strain>
        <tissue>Ascending colon</tissue>
    </source>
</reference>
<reference key="2">
    <citation type="submission" date="1997-01" db="EMBL/GenBank/DDBJ databases">
        <authorList>
            <person name="Comera C."/>
            <person name="Creutz C.E."/>
        </authorList>
    </citation>
    <scope>NUCLEOTIDE SEQUENCE [MRNA] OF 56-673</scope>
    <source>
        <tissue>Liver</tissue>
    </source>
</reference>
<reference key="3">
    <citation type="journal article" date="1998" name="Biochim. Biophys. Acta">
        <title>Crystal structure of bovine annexin VI in a calcium-bound state.</title>
        <authorList>
            <person name="Avila-Sakar A.J."/>
            <person name="Creutz C.E."/>
            <person name="Kretsinger R.H."/>
        </authorList>
    </citation>
    <scope>X-RAY CRYSTALLOGRAPHY (2.9 ANGSTROMS) OF 56-673 IN COMPLEX WITH CALCIUM</scope>
</reference>
<sequence length="673" mass="75907">MAKPAQGAKYRGSIRDFPDFNPSQDAETLYNAMKGFGSDKEAILELITSRSNRQRQEICQNYKSLYGKDLIADLKYELTGKFERLIVGLMRPPAYADAKEIKDAISGIGTDEKCLIEILASRTNEQIHQLVAAYKDAYERDLEADITGDTSGHFRKMLVVLLQGTREEDDVVSEDLVQQDVQDLYEAGELKWGTDEAQFIYILGNRSKQHLRLVFDEYLKTTGKPIEASIRGELSGDFEKLMLAVVKCIRSTAEYFAERLFKAMKGLGTRDNTLIRIMVSRSELDMLDIREIFRTKYEKSLYSMIKNDTSGEYKKTLLKLCGGDDDAAGQFFPEAAQVAYQMWELSAVARVELKGTVRPAGDFNPDADAKALRKAMKGLGTDEDTIIDIIAHRSNAQRQQIRQTFKSHFGRDLMADLKSELSGDLARLILGLMMPPAHYDAKQLKKAMEGAGTDEKALIEILATRTNAEIQAINKAYKEDYHKSLEDALSSDTSGHFKRILISLATGNREEGGEDRERAREDAQVAAEILEIADTTSGDKSSLETRFMMILCTRSYPHLRRVFQEFIKMTNYDVEHTIKKEMSGDVRDVFVAIVQSVKNKPLFFADKLYKSMKGAGTDEKTLTRIMVSRSEIDLLNIRREFIEKYDKSLHQAIEGDTSGHFLKALLAICGGED</sequence>
<gene>
    <name type="primary">ANXA6</name>
    <name type="synonym">ANX6</name>
</gene>